<keyword id="KW-0256">Endoplasmic reticulum</keyword>
<keyword id="KW-0349">Heme</keyword>
<keyword id="KW-0408">Iron</keyword>
<keyword id="KW-1184">Jasmonic acid signaling pathway</keyword>
<keyword id="KW-0472">Membrane</keyword>
<keyword id="KW-0479">Metal-binding</keyword>
<keyword id="KW-0503">Monooxygenase</keyword>
<keyword id="KW-0560">Oxidoreductase</keyword>
<keyword id="KW-1185">Reference proteome</keyword>
<keyword id="KW-0812">Transmembrane</keyword>
<keyword id="KW-1133">Transmembrane helix</keyword>
<gene>
    <name evidence="9" type="primary">CYP94B3</name>
    <name evidence="14" type="ordered locus">At3g48520</name>
    <name evidence="15" type="ORF">T8P19.30</name>
</gene>
<protein>
    <recommendedName>
        <fullName evidence="12">Cytochrome P450 94B3</fullName>
        <ecNumber evidence="4 6">1.14.14.48</ecNumber>
    </recommendedName>
    <alternativeName>
        <fullName evidence="11">Jasmonoyl-L-amino acid 12-hydroxylase</fullName>
    </alternativeName>
    <alternativeName>
        <fullName evidence="10">Jasmonoyl-isoleucine-12-hydroxylase</fullName>
    </alternativeName>
</protein>
<accession>Q9SMP5</accession>
<name>C94B3_ARATH</name>
<organism>
    <name type="scientific">Arabidopsis thaliana</name>
    <name type="common">Mouse-ear cress</name>
    <dbReference type="NCBI Taxonomy" id="3702"/>
    <lineage>
        <taxon>Eukaryota</taxon>
        <taxon>Viridiplantae</taxon>
        <taxon>Streptophyta</taxon>
        <taxon>Embryophyta</taxon>
        <taxon>Tracheophyta</taxon>
        <taxon>Spermatophyta</taxon>
        <taxon>Magnoliopsida</taxon>
        <taxon>eudicotyledons</taxon>
        <taxon>Gunneridae</taxon>
        <taxon>Pentapetalae</taxon>
        <taxon>rosids</taxon>
        <taxon>malvids</taxon>
        <taxon>Brassicales</taxon>
        <taxon>Brassicaceae</taxon>
        <taxon>Camelineae</taxon>
        <taxon>Arabidopsis</taxon>
    </lineage>
</organism>
<dbReference type="EC" id="1.14.14.48" evidence="4 6"/>
<dbReference type="EMBL" id="AL133315">
    <property type="protein sequence ID" value="CAB62341.1"/>
    <property type="molecule type" value="Genomic_DNA"/>
</dbReference>
<dbReference type="EMBL" id="CP002686">
    <property type="protein sequence ID" value="AEE78426.1"/>
    <property type="molecule type" value="Genomic_DNA"/>
</dbReference>
<dbReference type="EMBL" id="BT015332">
    <property type="protein sequence ID" value="AAU05455.1"/>
    <property type="molecule type" value="mRNA"/>
</dbReference>
<dbReference type="EMBL" id="BT015841">
    <property type="protein sequence ID" value="AAU94404.1"/>
    <property type="molecule type" value="mRNA"/>
</dbReference>
<dbReference type="EMBL" id="AK226339">
    <property type="protein sequence ID" value="BAE98488.1"/>
    <property type="molecule type" value="mRNA"/>
</dbReference>
<dbReference type="PIR" id="T46196">
    <property type="entry name" value="T46196"/>
</dbReference>
<dbReference type="RefSeq" id="NP_190421.1">
    <property type="nucleotide sequence ID" value="NM_114710.3"/>
</dbReference>
<dbReference type="SMR" id="Q9SMP5"/>
<dbReference type="BioGRID" id="9330">
    <property type="interactions" value="3"/>
</dbReference>
<dbReference type="FunCoup" id="Q9SMP5">
    <property type="interactions" value="223"/>
</dbReference>
<dbReference type="STRING" id="3702.Q9SMP5"/>
<dbReference type="SwissLipids" id="SLP:000001770"/>
<dbReference type="iPTMnet" id="Q9SMP5"/>
<dbReference type="PaxDb" id="3702-AT3G48520.1"/>
<dbReference type="ProteomicsDB" id="240274"/>
<dbReference type="EnsemblPlants" id="AT3G48520.1">
    <property type="protein sequence ID" value="AT3G48520.1"/>
    <property type="gene ID" value="AT3G48520"/>
</dbReference>
<dbReference type="GeneID" id="824011"/>
<dbReference type="Gramene" id="AT3G48520.1">
    <property type="protein sequence ID" value="AT3G48520.1"/>
    <property type="gene ID" value="AT3G48520"/>
</dbReference>
<dbReference type="KEGG" id="ath:AT3G48520"/>
<dbReference type="Araport" id="AT3G48520"/>
<dbReference type="TAIR" id="AT3G48520">
    <property type="gene designation" value="CYP94B3"/>
</dbReference>
<dbReference type="eggNOG" id="KOG0157">
    <property type="taxonomic scope" value="Eukaryota"/>
</dbReference>
<dbReference type="HOGENOM" id="CLU_001570_27_2_1"/>
<dbReference type="InParanoid" id="Q9SMP5"/>
<dbReference type="OMA" id="ISPMYMG"/>
<dbReference type="PhylomeDB" id="Q9SMP5"/>
<dbReference type="BioCyc" id="ARA:AT3G48520-MONOMER"/>
<dbReference type="BioCyc" id="MetaCyc:AT3G48520-MONOMER"/>
<dbReference type="BRENDA" id="1.14.14.48">
    <property type="organism ID" value="399"/>
</dbReference>
<dbReference type="PRO" id="PR:Q9SMP5"/>
<dbReference type="Proteomes" id="UP000006548">
    <property type="component" value="Chromosome 3"/>
</dbReference>
<dbReference type="ExpressionAtlas" id="Q9SMP5">
    <property type="expression patterns" value="baseline and differential"/>
</dbReference>
<dbReference type="GO" id="GO:0005789">
    <property type="term" value="C:endoplasmic reticulum membrane"/>
    <property type="evidence" value="ECO:0000314"/>
    <property type="project" value="UniProtKB"/>
</dbReference>
<dbReference type="GO" id="GO:0020037">
    <property type="term" value="F:heme binding"/>
    <property type="evidence" value="ECO:0007669"/>
    <property type="project" value="InterPro"/>
</dbReference>
<dbReference type="GO" id="GO:0005506">
    <property type="term" value="F:iron ion binding"/>
    <property type="evidence" value="ECO:0007669"/>
    <property type="project" value="InterPro"/>
</dbReference>
<dbReference type="GO" id="GO:0052694">
    <property type="term" value="F:jasmonoyl-isoleucine-12-hydroxylase activity"/>
    <property type="evidence" value="ECO:0000314"/>
    <property type="project" value="TAIR"/>
</dbReference>
<dbReference type="GO" id="GO:0016705">
    <property type="term" value="F:oxidoreductase activity, acting on paired donors, with incorporation or reduction of molecular oxygen"/>
    <property type="evidence" value="ECO:0007669"/>
    <property type="project" value="InterPro"/>
</dbReference>
<dbReference type="GO" id="GO:0048653">
    <property type="term" value="P:anther development"/>
    <property type="evidence" value="ECO:0000315"/>
    <property type="project" value="TAIR"/>
</dbReference>
<dbReference type="GO" id="GO:0002213">
    <property type="term" value="P:defense response to insect"/>
    <property type="evidence" value="ECO:0000315"/>
    <property type="project" value="TAIR"/>
</dbReference>
<dbReference type="GO" id="GO:0010154">
    <property type="term" value="P:fruit development"/>
    <property type="evidence" value="ECO:0000315"/>
    <property type="project" value="TAIR"/>
</dbReference>
<dbReference type="GO" id="GO:0009694">
    <property type="term" value="P:jasmonic acid metabolic process"/>
    <property type="evidence" value="ECO:0000315"/>
    <property type="project" value="TAIR"/>
</dbReference>
<dbReference type="GO" id="GO:0009555">
    <property type="term" value="P:pollen development"/>
    <property type="evidence" value="ECO:0000315"/>
    <property type="project" value="TAIR"/>
</dbReference>
<dbReference type="GO" id="GO:0009611">
    <property type="term" value="P:response to wounding"/>
    <property type="evidence" value="ECO:0000270"/>
    <property type="project" value="TAIR"/>
</dbReference>
<dbReference type="GO" id="GO:0048480">
    <property type="term" value="P:stigma development"/>
    <property type="evidence" value="ECO:0000315"/>
    <property type="project" value="TAIR"/>
</dbReference>
<dbReference type="CDD" id="cd11064">
    <property type="entry name" value="CYP86A"/>
    <property type="match status" value="1"/>
</dbReference>
<dbReference type="FunFam" id="1.10.630.10:FF:000044">
    <property type="entry name" value="Cytochrome P450"/>
    <property type="match status" value="1"/>
</dbReference>
<dbReference type="Gene3D" id="1.10.630.10">
    <property type="entry name" value="Cytochrome P450"/>
    <property type="match status" value="1"/>
</dbReference>
<dbReference type="InterPro" id="IPR001128">
    <property type="entry name" value="Cyt_P450"/>
</dbReference>
<dbReference type="InterPro" id="IPR002401">
    <property type="entry name" value="Cyt_P450_E_grp-I"/>
</dbReference>
<dbReference type="InterPro" id="IPR036396">
    <property type="entry name" value="Cyt_P450_sf"/>
</dbReference>
<dbReference type="PANTHER" id="PTHR24296">
    <property type="entry name" value="CYTOCHROME P450"/>
    <property type="match status" value="1"/>
</dbReference>
<dbReference type="Pfam" id="PF00067">
    <property type="entry name" value="p450"/>
    <property type="match status" value="1"/>
</dbReference>
<dbReference type="PRINTS" id="PR00463">
    <property type="entry name" value="EP450I"/>
</dbReference>
<dbReference type="PRINTS" id="PR00385">
    <property type="entry name" value="P450"/>
</dbReference>
<dbReference type="SUPFAM" id="SSF48264">
    <property type="entry name" value="Cytochrome P450"/>
    <property type="match status" value="1"/>
</dbReference>
<reference key="1">
    <citation type="journal article" date="2000" name="Nature">
        <title>Sequence and analysis of chromosome 3 of the plant Arabidopsis thaliana.</title>
        <authorList>
            <person name="Salanoubat M."/>
            <person name="Lemcke K."/>
            <person name="Rieger M."/>
            <person name="Ansorge W."/>
            <person name="Unseld M."/>
            <person name="Fartmann B."/>
            <person name="Valle G."/>
            <person name="Bloecker H."/>
            <person name="Perez-Alonso M."/>
            <person name="Obermaier B."/>
            <person name="Delseny M."/>
            <person name="Boutry M."/>
            <person name="Grivell L.A."/>
            <person name="Mache R."/>
            <person name="Puigdomenech P."/>
            <person name="De Simone V."/>
            <person name="Choisne N."/>
            <person name="Artiguenave F."/>
            <person name="Robert C."/>
            <person name="Brottier P."/>
            <person name="Wincker P."/>
            <person name="Cattolico L."/>
            <person name="Weissenbach J."/>
            <person name="Saurin W."/>
            <person name="Quetier F."/>
            <person name="Schaefer M."/>
            <person name="Mueller-Auer S."/>
            <person name="Gabel C."/>
            <person name="Fuchs M."/>
            <person name="Benes V."/>
            <person name="Wurmbach E."/>
            <person name="Drzonek H."/>
            <person name="Erfle H."/>
            <person name="Jordan N."/>
            <person name="Bangert S."/>
            <person name="Wiedelmann R."/>
            <person name="Kranz H."/>
            <person name="Voss H."/>
            <person name="Holland R."/>
            <person name="Brandt P."/>
            <person name="Nyakatura G."/>
            <person name="Vezzi A."/>
            <person name="D'Angelo M."/>
            <person name="Pallavicini A."/>
            <person name="Toppo S."/>
            <person name="Simionati B."/>
            <person name="Conrad A."/>
            <person name="Hornischer K."/>
            <person name="Kauer G."/>
            <person name="Loehnert T.-H."/>
            <person name="Nordsiek G."/>
            <person name="Reichelt J."/>
            <person name="Scharfe M."/>
            <person name="Schoen O."/>
            <person name="Bargues M."/>
            <person name="Terol J."/>
            <person name="Climent J."/>
            <person name="Navarro P."/>
            <person name="Collado C."/>
            <person name="Perez-Perez A."/>
            <person name="Ottenwaelder B."/>
            <person name="Duchemin D."/>
            <person name="Cooke R."/>
            <person name="Laudie M."/>
            <person name="Berger-Llauro C."/>
            <person name="Purnelle B."/>
            <person name="Masuy D."/>
            <person name="de Haan M."/>
            <person name="Maarse A.C."/>
            <person name="Alcaraz J.-P."/>
            <person name="Cottet A."/>
            <person name="Casacuberta E."/>
            <person name="Monfort A."/>
            <person name="Argiriou A."/>
            <person name="Flores M."/>
            <person name="Liguori R."/>
            <person name="Vitale D."/>
            <person name="Mannhaupt G."/>
            <person name="Haase D."/>
            <person name="Schoof H."/>
            <person name="Rudd S."/>
            <person name="Zaccaria P."/>
            <person name="Mewes H.-W."/>
            <person name="Mayer K.F.X."/>
            <person name="Kaul S."/>
            <person name="Town C.D."/>
            <person name="Koo H.L."/>
            <person name="Tallon L.J."/>
            <person name="Jenkins J."/>
            <person name="Rooney T."/>
            <person name="Rizzo M."/>
            <person name="Walts A."/>
            <person name="Utterback T."/>
            <person name="Fujii C.Y."/>
            <person name="Shea T.P."/>
            <person name="Creasy T.H."/>
            <person name="Haas B."/>
            <person name="Maiti R."/>
            <person name="Wu D."/>
            <person name="Peterson J."/>
            <person name="Van Aken S."/>
            <person name="Pai G."/>
            <person name="Militscher J."/>
            <person name="Sellers P."/>
            <person name="Gill J.E."/>
            <person name="Feldblyum T.V."/>
            <person name="Preuss D."/>
            <person name="Lin X."/>
            <person name="Nierman W.C."/>
            <person name="Salzberg S.L."/>
            <person name="White O."/>
            <person name="Venter J.C."/>
            <person name="Fraser C.M."/>
            <person name="Kaneko T."/>
            <person name="Nakamura Y."/>
            <person name="Sato S."/>
            <person name="Kato T."/>
            <person name="Asamizu E."/>
            <person name="Sasamoto S."/>
            <person name="Kimura T."/>
            <person name="Idesawa K."/>
            <person name="Kawashima K."/>
            <person name="Kishida Y."/>
            <person name="Kiyokawa C."/>
            <person name="Kohara M."/>
            <person name="Matsumoto M."/>
            <person name="Matsuno A."/>
            <person name="Muraki A."/>
            <person name="Nakayama S."/>
            <person name="Nakazaki N."/>
            <person name="Shinpo S."/>
            <person name="Takeuchi C."/>
            <person name="Wada T."/>
            <person name="Watanabe A."/>
            <person name="Yamada M."/>
            <person name="Yasuda M."/>
            <person name="Tabata S."/>
        </authorList>
    </citation>
    <scope>NUCLEOTIDE SEQUENCE [LARGE SCALE GENOMIC DNA]</scope>
    <source>
        <strain>cv. Columbia</strain>
    </source>
</reference>
<reference key="2">
    <citation type="journal article" date="2017" name="Plant J.">
        <title>Araport11: a complete reannotation of the Arabidopsis thaliana reference genome.</title>
        <authorList>
            <person name="Cheng C.Y."/>
            <person name="Krishnakumar V."/>
            <person name="Chan A.P."/>
            <person name="Thibaud-Nissen F."/>
            <person name="Schobel S."/>
            <person name="Town C.D."/>
        </authorList>
    </citation>
    <scope>GENOME REANNOTATION</scope>
    <source>
        <strain>cv. Columbia</strain>
    </source>
</reference>
<reference key="3">
    <citation type="submission" date="2004-10" db="EMBL/GenBank/DDBJ databases">
        <title>Arabidopsis ORF clones.</title>
        <authorList>
            <person name="Kim C.J."/>
            <person name="Chen H."/>
            <person name="Cheuk R.F."/>
            <person name="Shinn P."/>
            <person name="Ecker J.R."/>
        </authorList>
    </citation>
    <scope>NUCLEOTIDE SEQUENCE [LARGE SCALE MRNA]</scope>
    <source>
        <strain>cv. Columbia</strain>
    </source>
</reference>
<reference key="4">
    <citation type="submission" date="2006-07" db="EMBL/GenBank/DDBJ databases">
        <title>Large-scale analysis of RIKEN Arabidopsis full-length (RAFL) cDNAs.</title>
        <authorList>
            <person name="Totoki Y."/>
            <person name="Seki M."/>
            <person name="Ishida J."/>
            <person name="Nakajima M."/>
            <person name="Enju A."/>
            <person name="Kamiya A."/>
            <person name="Narusaka M."/>
            <person name="Shin-i T."/>
            <person name="Nakagawa M."/>
            <person name="Sakamoto N."/>
            <person name="Oishi K."/>
            <person name="Kohara Y."/>
            <person name="Kobayashi M."/>
            <person name="Toyoda A."/>
            <person name="Sakaki Y."/>
            <person name="Sakurai T."/>
            <person name="Iida K."/>
            <person name="Akiyama K."/>
            <person name="Satou M."/>
            <person name="Toyoda T."/>
            <person name="Konagaya A."/>
            <person name="Carninci P."/>
            <person name="Kawai J."/>
            <person name="Hayashizaki Y."/>
            <person name="Shinozaki K."/>
        </authorList>
    </citation>
    <scope>NUCLEOTIDE SEQUENCE [LARGE SCALE MRNA]</scope>
    <source>
        <strain>cv. Columbia</strain>
    </source>
</reference>
<reference key="5">
    <citation type="journal article" date="2011" name="Plant Cell Physiol.">
        <title>Arabidopsis CYP94B3 encodes jasmonyl-L-isoleucine 12-hydroxylase, a key enzyme in the oxidative catabolism of jasmonate.</title>
        <authorList>
            <person name="Kitaoka N."/>
            <person name="Matsubara T."/>
            <person name="Sato M."/>
            <person name="Takahashi K."/>
            <person name="Wakuta S."/>
            <person name="Kawaide H."/>
            <person name="Matsui H."/>
            <person name="Nabeta K."/>
            <person name="Matsuura H."/>
        </authorList>
    </citation>
    <scope>FUNCTION</scope>
    <scope>INDUCTION BY WOUNDING</scope>
    <scope>DISRUPTION PHENOTYPE</scope>
</reference>
<reference key="6">
    <citation type="journal article" date="2011" name="Proc. Natl. Acad. Sci. U.S.A.">
        <title>Cytochrome P450 CYP94B3 mediates catabolism and inactivation of the plant hormone jasmonoyl-L-isoleucine.</title>
        <authorList>
            <person name="Koo A.J."/>
            <person name="Cooke T.F."/>
            <person name="Howe G.A."/>
        </authorList>
    </citation>
    <scope>FUNCTION</scope>
    <scope>CATALYTIC ACTIVITY</scope>
    <scope>INDUCTION BY WOUNDING</scope>
    <scope>DISRUPTION PHENOTYPE</scope>
</reference>
<reference key="7">
    <citation type="journal article" date="2012" name="J. Biol. Chem.">
        <title>Cytochromes P450 CYP94C1 and CYP94B3 catalyze two successive oxidation steps of plant hormone jasmonoyl-isoleucine for catabolic turnover.</title>
        <authorList>
            <person name="Heitz T."/>
            <person name="Widemann E."/>
            <person name="Lugan R."/>
            <person name="Miesch L."/>
            <person name="Ullmann P."/>
            <person name="Desaubry L."/>
            <person name="Holder E."/>
            <person name="Grausem B."/>
            <person name="Kandel S."/>
            <person name="Miesch M."/>
            <person name="Werck-Reichhart D."/>
            <person name="Pinot F."/>
        </authorList>
    </citation>
    <scope>FUNCTION</scope>
    <scope>CATALYTIC ACTIVITY</scope>
    <scope>INDUCTION BY WOUNDING</scope>
    <scope>DISRUPTION PHENOTYPE</scope>
</reference>
<reference key="8">
    <citation type="journal article" date="2014" name="J. Biol. Chem.">
        <title>Endoplasmic reticulum-associated inactivation of the hormone jasmonoyl-L-isoleucine by multiple members of the cytochrome P450 94 family in Arabidopsis.</title>
        <authorList>
            <person name="Koo A.J."/>
            <person name="Thireault C."/>
            <person name="Zemelis S."/>
            <person name="Poudel A.N."/>
            <person name="Zhang T."/>
            <person name="Kitaoka N."/>
            <person name="Brandizzi F."/>
            <person name="Matsuura H."/>
            <person name="Howe G.A."/>
        </authorList>
    </citation>
    <scope>SUBCELLULAR LOCATION</scope>
</reference>
<reference key="9">
    <citation type="journal article" date="2014" name="Phytochemistry">
        <title>CYP94B3 activity against jasmonic acid amino acid conjugates and the elucidation of 12-O-beta-glucopyranosyl-jasmonoyl-L-isoleucine as an additional metabolite.</title>
        <authorList>
            <person name="Kitaoka N."/>
            <person name="Kawaide H."/>
            <person name="Amano N."/>
            <person name="Matsubara T."/>
            <person name="Nabeta K."/>
            <person name="Takahashi K."/>
            <person name="Matsuura H."/>
        </authorList>
    </citation>
    <scope>FUNCTION</scope>
</reference>
<feature type="chain" id="PRO_0000425853" description="Cytochrome P450 94B3">
    <location>
        <begin position="1"/>
        <end position="506"/>
    </location>
</feature>
<feature type="transmembrane region" description="Helical" evidence="3">
    <location>
        <begin position="2"/>
        <end position="22"/>
    </location>
</feature>
<feature type="binding site" description="axial binding residue" evidence="1">
    <location>
        <position position="447"/>
    </location>
    <ligand>
        <name>heme</name>
        <dbReference type="ChEBI" id="CHEBI:30413"/>
    </ligand>
    <ligandPart>
        <name>Fe</name>
        <dbReference type="ChEBI" id="CHEBI:18248"/>
    </ligandPart>
</feature>
<proteinExistence type="evidence at protein level"/>
<sequence>MAFLLSFLILAFLITIIFFLSSSSTKKVQENTTYGPPSYPLIGSILSFNKNRHRLLQWYTELLRLSPSQTILVPLLGNRRTIITTNPLNVEYILKTNFFNFPKGKPFTDLLGDLLGGGIFNVDGHSWSSQRKLASHEFSTRSLRSFAFEVLKDEVENRLVPVLSTAADVGTTVDLQDVLKRFAFDVVCKVSLGWDPDCLDLTRPVNPLVEAFDTAAEISARRATEPIYAVWKTKRVLNVGSERKLREAIRTVHVLVSEIVRAKKKSLEIGTGAEAKQDLLSRFLAAGHNGEAVRDMVISFIMAGRDTTSAAMTWLFWLLTENDDVERKILEEVDPLVSLGLGFEDLKEMAYTKACLCEAMRLYPPVSWDSKHAANDDVLPDGTRVKRGDKVTYFPYGMGRMETLWGTDSEEFNPNRWFDSEPGSTRPVLKPISPYKFPVFQAGPRVCVGKEMAFMQMKYVVGSVLSRFEIVPVNKDRPVFVPLLTAHMAGGLKVKIKRRSHILNNV</sequence>
<evidence type="ECO:0000250" key="1"/>
<evidence type="ECO:0000250" key="2">
    <source>
        <dbReference type="UniProtKB" id="Q96242"/>
    </source>
</evidence>
<evidence type="ECO:0000255" key="3"/>
<evidence type="ECO:0000269" key="4">
    <source>
    </source>
</evidence>
<evidence type="ECO:0000269" key="5">
    <source>
    </source>
</evidence>
<evidence type="ECO:0000269" key="6">
    <source>
    </source>
</evidence>
<evidence type="ECO:0000269" key="7">
    <source>
    </source>
</evidence>
<evidence type="ECO:0000269" key="8">
    <source>
    </source>
</evidence>
<evidence type="ECO:0000303" key="9">
    <source>
    </source>
</evidence>
<evidence type="ECO:0000303" key="10">
    <source>
    </source>
</evidence>
<evidence type="ECO:0000303" key="11">
    <source>
    </source>
</evidence>
<evidence type="ECO:0000305" key="12"/>
<evidence type="ECO:0000305" key="13">
    <source>
    </source>
</evidence>
<evidence type="ECO:0000312" key="14">
    <source>
        <dbReference type="Araport" id="AT3G48520"/>
    </source>
</evidence>
<evidence type="ECO:0000312" key="15">
    <source>
        <dbReference type="EMBL" id="CAB62341.1"/>
    </source>
</evidence>
<comment type="function">
    <text evidence="4 5 6 7">Hydroxylase involved in the oxidation of the plant hormone jasmonoyl-L-isoleucine (JA-Ile), a bioactive phytohormone of the jasmonate-mediated signaling pathway. Converts JA-Ile to 12-hydroxy-JA-Ile (PubMed:21576464, PubMed:21849397, PubMed:22215670). Exerts negative feedback control on JA-Ile levels and plays a key role in attenuation of jasmonate responses. Negatively regulates the expression of wound-induced genes TIFY11A/JAZ5, TIFY5A/JAZ8 and TIFY5A/JAZ10 (PubMed:21576464). Catalyzes the hydroxylation of jasmonoyl-L-valine (JA-Val), jasmonoyl-L-leucine (JA-Leu) and jasmonoyl-L-phenylalanine (JA-Phe) in vitro. Converts JA-Val, JA-Leu and JA-Phe to 12-hydroxy-JA-Val, 12-hydroxy-JA-Leu and 12-hydroxy-JA-Phe, respectively (PubMed:24467969).</text>
</comment>
<comment type="catalytic activity">
    <reaction evidence="4 6">
        <text>a jasmonyl-L-amino acid + reduced [NADPH--hemoprotein reductase] + O2 = a 12-hydroxyjasmonyl-L-alpha-amino acid + oxidized [NADPH--hemoprotein reductase] + H2O + H(+)</text>
        <dbReference type="Rhea" id="RHEA:54832"/>
        <dbReference type="Rhea" id="RHEA-COMP:11964"/>
        <dbReference type="Rhea" id="RHEA-COMP:11965"/>
        <dbReference type="ChEBI" id="CHEBI:15377"/>
        <dbReference type="ChEBI" id="CHEBI:15378"/>
        <dbReference type="ChEBI" id="CHEBI:15379"/>
        <dbReference type="ChEBI" id="CHEBI:57618"/>
        <dbReference type="ChEBI" id="CHEBI:58210"/>
        <dbReference type="ChEBI" id="CHEBI:136183"/>
        <dbReference type="ChEBI" id="CHEBI:138374"/>
        <dbReference type="EC" id="1.14.14.48"/>
    </reaction>
    <physiologicalReaction direction="left-to-right" evidence="4">
        <dbReference type="Rhea" id="RHEA:54833"/>
    </physiologicalReaction>
</comment>
<comment type="catalytic activity">
    <reaction evidence="4">
        <text>L-isoleucine-(+)-7-isojasmonate + NADPH + O2 + H(+) = L-isoleucine-(+)-12-hydroxy-7-isojasmonate + NADP(+) + H2O</text>
        <dbReference type="Rhea" id="RHEA:54808"/>
        <dbReference type="ChEBI" id="CHEBI:15377"/>
        <dbReference type="ChEBI" id="CHEBI:15378"/>
        <dbReference type="ChEBI" id="CHEBI:15379"/>
        <dbReference type="ChEBI" id="CHEBI:57783"/>
        <dbReference type="ChEBI" id="CHEBI:58349"/>
        <dbReference type="ChEBI" id="CHEBI:136180"/>
        <dbReference type="ChEBI" id="CHEBI:136181"/>
    </reaction>
    <physiologicalReaction direction="left-to-right" evidence="4">
        <dbReference type="Rhea" id="RHEA:54809"/>
    </physiologicalReaction>
</comment>
<comment type="catalytic activity">
    <reaction evidence="4">
        <text>a jasmonyl-L-isoleucinate + NADPH + O2 + H(+) = L-isoleucine-12-hydroxyjasmonate + NADP(+) + H2O</text>
        <dbReference type="Rhea" id="RHEA:55164"/>
        <dbReference type="ChEBI" id="CHEBI:15377"/>
        <dbReference type="ChEBI" id="CHEBI:15378"/>
        <dbReference type="ChEBI" id="CHEBI:15379"/>
        <dbReference type="ChEBI" id="CHEBI:57783"/>
        <dbReference type="ChEBI" id="CHEBI:58349"/>
        <dbReference type="ChEBI" id="CHEBI:138626"/>
        <dbReference type="ChEBI" id="CHEBI:138627"/>
    </reaction>
    <physiologicalReaction direction="left-to-right" evidence="4">
        <dbReference type="Rhea" id="RHEA:55165"/>
    </physiologicalReaction>
</comment>
<comment type="cofactor">
    <cofactor evidence="2">
        <name>heme</name>
        <dbReference type="ChEBI" id="CHEBI:30413"/>
    </cofactor>
</comment>
<comment type="subcellular location">
    <subcellularLocation>
        <location evidence="12">Membrane</location>
        <topology evidence="12">Single-pass membrane protein</topology>
    </subcellularLocation>
    <subcellularLocation>
        <location evidence="8">Endoplasmic reticulum membrane</location>
        <topology evidence="3">Single-pass membrane protein</topology>
    </subcellularLocation>
</comment>
<comment type="induction">
    <text evidence="4 5 6">Induced by wounding.</text>
</comment>
<comment type="disruption phenotype">
    <text evidence="4 5 6">No visible phenotype under normal growth conditions, but mutant plants accumulate high amounts of JA-Ile and have strongly reduced levels of 12-hydroxy-JA-Ile in response to wounding.</text>
</comment>
<comment type="miscellaneous">
    <text evidence="13">Plants over-expressing CAP94B3 are deficient in jasmonate perception.</text>
</comment>
<comment type="similarity">
    <text evidence="12">Belongs to the cytochrome P450 family.</text>
</comment>